<dbReference type="EC" id="3.5.4.19" evidence="1"/>
<dbReference type="EMBL" id="CP000514">
    <property type="protein sequence ID" value="ABM20489.1"/>
    <property type="molecule type" value="Genomic_DNA"/>
</dbReference>
<dbReference type="RefSeq" id="WP_011786830.1">
    <property type="nucleotide sequence ID" value="NC_008740.1"/>
</dbReference>
<dbReference type="SMR" id="A1U670"/>
<dbReference type="STRING" id="351348.Maqu_3418"/>
<dbReference type="KEGG" id="maq:Maqu_3418"/>
<dbReference type="eggNOG" id="COG0139">
    <property type="taxonomic scope" value="Bacteria"/>
</dbReference>
<dbReference type="HOGENOM" id="CLU_048577_5_0_6"/>
<dbReference type="OrthoDB" id="9795769at2"/>
<dbReference type="UniPathway" id="UPA00031">
    <property type="reaction ID" value="UER00008"/>
</dbReference>
<dbReference type="Proteomes" id="UP000000998">
    <property type="component" value="Chromosome"/>
</dbReference>
<dbReference type="GO" id="GO:0005737">
    <property type="term" value="C:cytoplasm"/>
    <property type="evidence" value="ECO:0007669"/>
    <property type="project" value="UniProtKB-SubCell"/>
</dbReference>
<dbReference type="GO" id="GO:0000287">
    <property type="term" value="F:magnesium ion binding"/>
    <property type="evidence" value="ECO:0007669"/>
    <property type="project" value="UniProtKB-UniRule"/>
</dbReference>
<dbReference type="GO" id="GO:0004635">
    <property type="term" value="F:phosphoribosyl-AMP cyclohydrolase activity"/>
    <property type="evidence" value="ECO:0007669"/>
    <property type="project" value="UniProtKB-UniRule"/>
</dbReference>
<dbReference type="GO" id="GO:0008270">
    <property type="term" value="F:zinc ion binding"/>
    <property type="evidence" value="ECO:0007669"/>
    <property type="project" value="UniProtKB-UniRule"/>
</dbReference>
<dbReference type="GO" id="GO:0000105">
    <property type="term" value="P:L-histidine biosynthetic process"/>
    <property type="evidence" value="ECO:0007669"/>
    <property type="project" value="UniProtKB-UniRule"/>
</dbReference>
<dbReference type="FunFam" id="3.10.20.810:FF:000001">
    <property type="entry name" value="Histidine biosynthesis bifunctional protein HisIE"/>
    <property type="match status" value="1"/>
</dbReference>
<dbReference type="Gene3D" id="4.10.80.70">
    <property type="match status" value="1"/>
</dbReference>
<dbReference type="Gene3D" id="3.10.20.810">
    <property type="entry name" value="Phosphoribosyl-AMP cyclohydrolase"/>
    <property type="match status" value="1"/>
</dbReference>
<dbReference type="HAMAP" id="MF_01021">
    <property type="entry name" value="HisI"/>
    <property type="match status" value="1"/>
</dbReference>
<dbReference type="InterPro" id="IPR026660">
    <property type="entry name" value="PRA-CH"/>
</dbReference>
<dbReference type="InterPro" id="IPR002496">
    <property type="entry name" value="PRib_AMP_CycHydrolase_dom"/>
</dbReference>
<dbReference type="InterPro" id="IPR038019">
    <property type="entry name" value="PRib_AMP_CycHydrolase_sf"/>
</dbReference>
<dbReference type="NCBIfam" id="NF000768">
    <property type="entry name" value="PRK00051.1"/>
    <property type="match status" value="1"/>
</dbReference>
<dbReference type="PANTHER" id="PTHR42945">
    <property type="entry name" value="HISTIDINE BIOSYNTHESIS BIFUNCTIONAL PROTEIN"/>
    <property type="match status" value="1"/>
</dbReference>
<dbReference type="PANTHER" id="PTHR42945:SF1">
    <property type="entry name" value="HISTIDINE BIOSYNTHESIS BIFUNCTIONAL PROTEIN HIS7"/>
    <property type="match status" value="1"/>
</dbReference>
<dbReference type="Pfam" id="PF01502">
    <property type="entry name" value="PRA-CH"/>
    <property type="match status" value="1"/>
</dbReference>
<dbReference type="SUPFAM" id="SSF141734">
    <property type="entry name" value="HisI-like"/>
    <property type="match status" value="1"/>
</dbReference>
<sequence>MQDSPANVVQPDWLDDIQWTEDGLVPAIAQDADNGDILMMAWMNRESLRLTVEEGQAVYWSRSRGKLWRKGESSGHQQVLRDIRLDCDADVVLLKVEQKGGIACHTGRRSCFYRTLKDGQWVSADPVIKDPNTIYGSN</sequence>
<feature type="chain" id="PRO_0000319697" description="Phosphoribosyl-AMP cyclohydrolase">
    <location>
        <begin position="1"/>
        <end position="138"/>
    </location>
</feature>
<feature type="binding site" evidence="1">
    <location>
        <position position="86"/>
    </location>
    <ligand>
        <name>Mg(2+)</name>
        <dbReference type="ChEBI" id="CHEBI:18420"/>
    </ligand>
</feature>
<feature type="binding site" evidence="1">
    <location>
        <position position="87"/>
    </location>
    <ligand>
        <name>Zn(2+)</name>
        <dbReference type="ChEBI" id="CHEBI:29105"/>
        <note>ligand shared between dimeric partners</note>
    </ligand>
</feature>
<feature type="binding site" evidence="1">
    <location>
        <position position="88"/>
    </location>
    <ligand>
        <name>Mg(2+)</name>
        <dbReference type="ChEBI" id="CHEBI:18420"/>
    </ligand>
</feature>
<feature type="binding site" evidence="1">
    <location>
        <position position="90"/>
    </location>
    <ligand>
        <name>Mg(2+)</name>
        <dbReference type="ChEBI" id="CHEBI:18420"/>
    </ligand>
</feature>
<feature type="binding site" evidence="1">
    <location>
        <position position="104"/>
    </location>
    <ligand>
        <name>Zn(2+)</name>
        <dbReference type="ChEBI" id="CHEBI:29105"/>
        <note>ligand shared between dimeric partners</note>
    </ligand>
</feature>
<feature type="binding site" evidence="1">
    <location>
        <position position="111"/>
    </location>
    <ligand>
        <name>Zn(2+)</name>
        <dbReference type="ChEBI" id="CHEBI:29105"/>
        <note>ligand shared between dimeric partners</note>
    </ligand>
</feature>
<organism>
    <name type="scientific">Marinobacter nauticus (strain ATCC 700491 / DSM 11845 / VT8)</name>
    <name type="common">Marinobacter aquaeolei</name>
    <dbReference type="NCBI Taxonomy" id="351348"/>
    <lineage>
        <taxon>Bacteria</taxon>
        <taxon>Pseudomonadati</taxon>
        <taxon>Pseudomonadota</taxon>
        <taxon>Gammaproteobacteria</taxon>
        <taxon>Pseudomonadales</taxon>
        <taxon>Marinobacteraceae</taxon>
        <taxon>Marinobacter</taxon>
    </lineage>
</organism>
<evidence type="ECO:0000255" key="1">
    <source>
        <dbReference type="HAMAP-Rule" id="MF_01021"/>
    </source>
</evidence>
<comment type="function">
    <text evidence="1">Catalyzes the hydrolysis of the adenine ring of phosphoribosyl-AMP.</text>
</comment>
<comment type="catalytic activity">
    <reaction evidence="1">
        <text>1-(5-phospho-beta-D-ribosyl)-5'-AMP + H2O = 1-(5-phospho-beta-D-ribosyl)-5-[(5-phospho-beta-D-ribosylamino)methylideneamino]imidazole-4-carboxamide</text>
        <dbReference type="Rhea" id="RHEA:20049"/>
        <dbReference type="ChEBI" id="CHEBI:15377"/>
        <dbReference type="ChEBI" id="CHEBI:58435"/>
        <dbReference type="ChEBI" id="CHEBI:59457"/>
        <dbReference type="EC" id="3.5.4.19"/>
    </reaction>
</comment>
<comment type="cofactor">
    <cofactor evidence="1">
        <name>Mg(2+)</name>
        <dbReference type="ChEBI" id="CHEBI:18420"/>
    </cofactor>
    <text evidence="1">Binds 1 Mg(2+) ion per subunit.</text>
</comment>
<comment type="cofactor">
    <cofactor evidence="1">
        <name>Zn(2+)</name>
        <dbReference type="ChEBI" id="CHEBI:29105"/>
    </cofactor>
    <text evidence="1">Binds 1 zinc ion per subunit.</text>
</comment>
<comment type="pathway">
    <text evidence="1">Amino-acid biosynthesis; L-histidine biosynthesis; L-histidine from 5-phospho-alpha-D-ribose 1-diphosphate: step 3/9.</text>
</comment>
<comment type="subunit">
    <text evidence="1">Homodimer.</text>
</comment>
<comment type="subcellular location">
    <subcellularLocation>
        <location evidence="1">Cytoplasm</location>
    </subcellularLocation>
</comment>
<comment type="similarity">
    <text evidence="1">Belongs to the PRA-CH family.</text>
</comment>
<name>HIS3_MARN8</name>
<keyword id="KW-0028">Amino-acid biosynthesis</keyword>
<keyword id="KW-0963">Cytoplasm</keyword>
<keyword id="KW-0368">Histidine biosynthesis</keyword>
<keyword id="KW-0378">Hydrolase</keyword>
<keyword id="KW-0460">Magnesium</keyword>
<keyword id="KW-0479">Metal-binding</keyword>
<keyword id="KW-0862">Zinc</keyword>
<reference key="1">
    <citation type="journal article" date="2011" name="Appl. Environ. Microbiol.">
        <title>Genomic potential of Marinobacter aquaeolei, a biogeochemical 'opportunitroph'.</title>
        <authorList>
            <person name="Singer E."/>
            <person name="Webb E.A."/>
            <person name="Nelson W.C."/>
            <person name="Heidelberg J.F."/>
            <person name="Ivanova N."/>
            <person name="Pati A."/>
            <person name="Edwards K.J."/>
        </authorList>
    </citation>
    <scope>NUCLEOTIDE SEQUENCE [LARGE SCALE GENOMIC DNA]</scope>
    <source>
        <strain>ATCC 700491 / DSM 11845 / VT8</strain>
    </source>
</reference>
<accession>A1U670</accession>
<proteinExistence type="inferred from homology"/>
<gene>
    <name evidence="1" type="primary">hisI</name>
    <name type="ordered locus">Maqu_3418</name>
</gene>
<protein>
    <recommendedName>
        <fullName evidence="1">Phosphoribosyl-AMP cyclohydrolase</fullName>
        <shortName evidence="1">PRA-CH</shortName>
        <ecNumber evidence="1">3.5.4.19</ecNumber>
    </recommendedName>
</protein>